<comment type="function">
    <text evidence="1">Minor protein of the capsid that localizes along the inner surface of the virion, within the central cavities beneath the L1 pentamers. Plays a role in capsid stabilization through interaction with the major capsid protein L1. Once the virion enters the host cell, L2 escorts the genomic DNA into the nucleus by promoting escape from the endosomal compartments and traffic through the host Golgi network. Mechanistically, the C-terminus of L2 possesses a cell-penetrating peptide that protudes from the host endosome, interacts with host cytoplasmic retromer cargo and thereby mediates the capsid delivery to the host trans-Golgi network. Plays a role through its interaction with host dynein in the intracellular microtubule-dependent transport of viral capsid toward the nucleus. Mediates the viral genome import into the nucleus through binding to host importins. Once within the nucleus, L2 localizes viral genomes to host PML bodies in order to activate early gene expression for establishment of infection. Later on, promotes late gene expression by interacting with the viral E2 protein and by inhibiting its transcriptional activation functions. During virion assembly, encapsidates the genome by direct interaction with the viral DNA.</text>
</comment>
<comment type="subunit">
    <text evidence="1">Interacts with major capsid protein L1. Interacts with E2; this interaction inhibits E2 transcriptional activity but not the DNA replication function E2. Interacts with host GADD45GIP1. Interacts with host HSPA8; this interaction is required for L2 nuclear translocation. Interacts with host importins KPNB2 and KPNB3. Forms a complex with importin alpha2-beta1 heterodimers via interaction with the importin alpha2 adapter. Interacts with host DYNLT1; this interaction is essential for virus intracellular transport during entry. Interacts (via C-terminus) with host retromer subunits VPS35 and VPS29.</text>
</comment>
<comment type="subcellular location">
    <subcellularLocation>
        <location evidence="1">Virion</location>
    </subcellularLocation>
    <subcellularLocation>
        <location evidence="1">Host nucleus</location>
    </subcellularLocation>
    <subcellularLocation>
        <location evidence="1">Host early endosome</location>
    </subcellularLocation>
    <subcellularLocation>
        <location evidence="1">Host Golgi apparatus</location>
    </subcellularLocation>
</comment>
<comment type="PTM">
    <text evidence="1">Highly phosphorylated.</text>
</comment>
<comment type="similarity">
    <text evidence="1">Belongs to the papillomaviridae L2 protein family.</text>
</comment>
<proteinExistence type="inferred from homology"/>
<sequence>MVRAARRKRASEDDLSRGCRAGQDCPIDIKNKYEQNTLADRILKWVSSFLYFGTLGISSGKGTGGATGYTPIGGGGVRGGKGANVVRPTVLVDALGPTGVPIDPVTPDEALVPLLESSGGSTTLDVPPGGEIEVIAEVHPPPAAGDPEITIGHPEEPPILEVIPETHPTTRVRTTVSKHDNPAFTAYVASAQLPGETSASDNVFILHGFNGEYVGPAQTGEDTVFEEIELENFGVPESPPSSSTPNTSFRNILNKFQRRLYNRRLVQQVKITDRTFLTKPSKLVSWEFDNPTYTDDSLSLIFQQDVDEVSAAPMAEFQDIVTLSRPVVYEREGLVRVSRLGQRGTIRTRSGLRIGGHVHYYTDISPIRPVEDIEMRTLGEVSGDSVIMQPLAESTFVDSGDVLNEGNIEFPDSTLEDDYNEDFSRARLEITTSARSRTSIVTVQEGIPPGSVKLFINDAETIVTPHGPESNDTDRYQPFIPVTPAATPDIIITFEEGTATFFLHPSLLKRHKHKHWFF</sequence>
<name>VL2_BPV3</name>
<reference key="1">
    <citation type="journal article" date="2002" name="J. Virol.">
        <title>Lack of canonical E6 and E7 open reading frames in bird papillomaviruses: Fringilla coelebs papillomavirus and Psittacus erithacus timneh papillomavirus.</title>
        <authorList>
            <person name="Terai M."/>
            <person name="DeSalle R."/>
            <person name="Burk R.D."/>
        </authorList>
    </citation>
    <scope>NUCLEOTIDE SEQUENCE [GENOMIC DNA]</scope>
</reference>
<reference key="2">
    <citation type="submission" date="2004-01" db="EMBL/GenBank/DDBJ databases">
        <title>Sequencing of the complete genomes of BPV 3, BPV 5 and BPV 6.</title>
        <authorList>
            <person name="Delius H."/>
            <person name="de Villiers E.M."/>
        </authorList>
    </citation>
    <scope>NUCLEOTIDE SEQUENCE [GENOMIC DNA]</scope>
</reference>
<dbReference type="EMBL" id="AF486184">
    <property type="protein sequence ID" value="AAN09960.1"/>
    <property type="molecule type" value="Genomic_DNA"/>
</dbReference>
<dbReference type="EMBL" id="AJ620207">
    <property type="protein sequence ID" value="CAF05682.1"/>
    <property type="molecule type" value="Genomic_DNA"/>
</dbReference>
<dbReference type="RefSeq" id="NP_694450.1">
    <property type="nucleotide sequence ID" value="NC_004197.1"/>
</dbReference>
<dbReference type="GeneID" id="955389"/>
<dbReference type="KEGG" id="vg:955389"/>
<dbReference type="Proteomes" id="UP000006369">
    <property type="component" value="Genome"/>
</dbReference>
<dbReference type="Proteomes" id="UP000185274">
    <property type="component" value="Segment"/>
</dbReference>
<dbReference type="GO" id="GO:0043657">
    <property type="term" value="C:host cell"/>
    <property type="evidence" value="ECO:0007669"/>
    <property type="project" value="GOC"/>
</dbReference>
<dbReference type="GO" id="GO:0044174">
    <property type="term" value="C:host cell endosome"/>
    <property type="evidence" value="ECO:0007669"/>
    <property type="project" value="UniProtKB-KW"/>
</dbReference>
<dbReference type="GO" id="GO:0044177">
    <property type="term" value="C:host cell Golgi apparatus"/>
    <property type="evidence" value="ECO:0007669"/>
    <property type="project" value="UniProtKB-SubCell"/>
</dbReference>
<dbReference type="GO" id="GO:0042025">
    <property type="term" value="C:host cell nucleus"/>
    <property type="evidence" value="ECO:0007669"/>
    <property type="project" value="UniProtKB-SubCell"/>
</dbReference>
<dbReference type="GO" id="GO:0019028">
    <property type="term" value="C:viral capsid"/>
    <property type="evidence" value="ECO:0007669"/>
    <property type="project" value="UniProtKB-UniRule"/>
</dbReference>
<dbReference type="GO" id="GO:0003677">
    <property type="term" value="F:DNA binding"/>
    <property type="evidence" value="ECO:0007669"/>
    <property type="project" value="UniProtKB-UniRule"/>
</dbReference>
<dbReference type="GO" id="GO:0005198">
    <property type="term" value="F:structural molecule activity"/>
    <property type="evidence" value="ECO:0007669"/>
    <property type="project" value="UniProtKB-UniRule"/>
</dbReference>
<dbReference type="GO" id="GO:0075521">
    <property type="term" value="P:microtubule-dependent intracellular transport of viral material towards nucleus"/>
    <property type="evidence" value="ECO:0007669"/>
    <property type="project" value="UniProtKB-UniRule"/>
</dbReference>
<dbReference type="GO" id="GO:0046718">
    <property type="term" value="P:symbiont entry into host cell"/>
    <property type="evidence" value="ECO:0007669"/>
    <property type="project" value="UniProtKB-KW"/>
</dbReference>
<dbReference type="GO" id="GO:0075732">
    <property type="term" value="P:viral penetration into host nucleus"/>
    <property type="evidence" value="ECO:0007669"/>
    <property type="project" value="UniProtKB-KW"/>
</dbReference>
<dbReference type="HAMAP" id="MF_04003">
    <property type="entry name" value="PPV_L2"/>
    <property type="match status" value="1"/>
</dbReference>
<dbReference type="InterPro" id="IPR000784">
    <property type="entry name" value="Late_L2"/>
</dbReference>
<dbReference type="Pfam" id="PF00513">
    <property type="entry name" value="Late_protein_L2"/>
    <property type="match status" value="1"/>
</dbReference>
<protein>
    <recommendedName>
        <fullName evidence="1">Minor capsid protein L2</fullName>
    </recommendedName>
</protein>
<keyword id="KW-0167">Capsid protein</keyword>
<keyword id="KW-1176">Cytoplasmic inwards viral transport</keyword>
<keyword id="KW-1015">Disulfide bond</keyword>
<keyword id="KW-0238">DNA-binding</keyword>
<keyword id="KW-1039">Host endosome</keyword>
<keyword id="KW-1040">Host Golgi apparatus</keyword>
<keyword id="KW-1048">Host nucleus</keyword>
<keyword id="KW-0945">Host-virus interaction</keyword>
<keyword id="KW-0426">Late protein</keyword>
<keyword id="KW-1177">Microtubular inwards viral transport</keyword>
<keyword id="KW-0597">Phosphoprotein</keyword>
<keyword id="KW-1185">Reference proteome</keyword>
<keyword id="KW-1163">Viral penetration into host nucleus</keyword>
<keyword id="KW-0946">Virion</keyword>
<keyword id="KW-1160">Virus entry into host cell</keyword>
<accession>Q705F9</accession>
<accession>Q8BDD4</accession>
<gene>
    <name evidence="1" type="primary">L2</name>
</gene>
<evidence type="ECO:0000255" key="1">
    <source>
        <dbReference type="HAMAP-Rule" id="MF_04003"/>
    </source>
</evidence>
<evidence type="ECO:0000305" key="2"/>
<feature type="chain" id="PRO_0000133562" description="Minor capsid protein L2">
    <location>
        <begin position="1"/>
        <end position="518"/>
    </location>
</feature>
<feature type="short sequence motif" description="Nuclear localization signal" evidence="1">
    <location>
        <begin position="1"/>
        <end position="10"/>
    </location>
</feature>
<feature type="short sequence motif" description="Nuclear localization signal" evidence="1">
    <location>
        <begin position="509"/>
        <end position="514"/>
    </location>
</feature>
<feature type="disulfide bond" evidence="1">
    <location>
        <begin position="19"/>
        <end position="25"/>
    </location>
</feature>
<feature type="sequence conflict" description="In Ref. 1; AAN09960." evidence="2" ref="1">
    <original>S</original>
    <variation>Y</variation>
    <location>
        <position position="16"/>
    </location>
</feature>
<organismHost>
    <name type="scientific">Bos taurus</name>
    <name type="common">Bovine</name>
    <dbReference type="NCBI Taxonomy" id="9913"/>
</organismHost>
<organism>
    <name type="scientific">Bovine papillomavirus type 3</name>
    <dbReference type="NCBI Taxonomy" id="2758957"/>
    <lineage>
        <taxon>Viruses</taxon>
        <taxon>Monodnaviria</taxon>
        <taxon>Shotokuvirae</taxon>
        <taxon>Cossaviricota</taxon>
        <taxon>Papovaviricetes</taxon>
        <taxon>Zurhausenvirales</taxon>
        <taxon>Papillomaviridae</taxon>
        <taxon>Firstpapillomavirinae</taxon>
        <taxon>Xipapillomavirus</taxon>
        <taxon>Xipapillomavirus 1</taxon>
    </lineage>
</organism>